<name>GDA6_WHEAT</name>
<keyword id="KW-0020">Allergen</keyword>
<keyword id="KW-1185">Reference proteome</keyword>
<keyword id="KW-0677">Repeat</keyword>
<keyword id="KW-0708">Seed storage protein</keyword>
<keyword id="KW-0732">Signal</keyword>
<keyword id="KW-0758">Storage protein</keyword>
<evidence type="ECO:0000250" key="1"/>
<evidence type="ECO:0000256" key="2">
    <source>
        <dbReference type="SAM" id="MobiDB-lite"/>
    </source>
</evidence>
<evidence type="ECO:0000305" key="3"/>
<protein>
    <recommendedName>
        <fullName>Alpha/beta-gliadin clone PW1215</fullName>
    </recommendedName>
    <alternativeName>
        <fullName>Prolamin</fullName>
    </alternativeName>
</protein>
<feature type="signal peptide">
    <location>
        <begin position="1"/>
        <end position="20"/>
    </location>
</feature>
<feature type="chain" id="PRO_0000032273" description="Alpha/beta-gliadin clone PW1215">
    <location>
        <begin position="21"/>
        <end position="296"/>
    </location>
</feature>
<feature type="region of interest" description="Disordered" evidence="2">
    <location>
        <begin position="24"/>
        <end position="126"/>
    </location>
</feature>
<feature type="region of interest" description="Disordered" evidence="2">
    <location>
        <begin position="220"/>
        <end position="255"/>
    </location>
</feature>
<feature type="compositionally biased region" description="Pro residues" evidence="2">
    <location>
        <begin position="25"/>
        <end position="36"/>
    </location>
</feature>
<feature type="compositionally biased region" description="Low complexity" evidence="2">
    <location>
        <begin position="37"/>
        <end position="58"/>
    </location>
</feature>
<feature type="compositionally biased region" description="Pro residues" evidence="2">
    <location>
        <begin position="59"/>
        <end position="71"/>
    </location>
</feature>
<feature type="compositionally biased region" description="Pro residues" evidence="2">
    <location>
        <begin position="81"/>
        <end position="116"/>
    </location>
</feature>
<feature type="compositionally biased region" description="Low complexity" evidence="2">
    <location>
        <begin position="117"/>
        <end position="126"/>
    </location>
</feature>
<feature type="compositionally biased region" description="Low complexity" evidence="2">
    <location>
        <begin position="220"/>
        <end position="241"/>
    </location>
</feature>
<feature type="compositionally biased region" description="Polar residues" evidence="2">
    <location>
        <begin position="242"/>
        <end position="255"/>
    </location>
</feature>
<accession>P04726</accession>
<sequence length="296" mass="33941">MKTFLILALLAIVATTATTAVRVPVPQPQPQNPSQPQPQGQVPLVQQQQFPGQQQQFPPQQPYPQPQPFPSQQPYLQLQPFPQPQPFPPQLPYPQPPPFSPQQPYPQPQPQYPQPQQPISQQQAQQQQQQQQQQQQQQQQQQILQQILQQQLIPCRDVVLQQHNIAHARSQVLQQSTYQPLQQLCCQQLWQIPEQSRCQAIHNVVHAIILHQQQRQQQPSSQVSLQQPQQQYPSGQGFFQPSQQNPQAQGSVQPQQLPQFEEIRNLALQTLPRMCNVYIPPYCSTTIAPFGIFGTN</sequence>
<organism>
    <name type="scientific">Triticum aestivum</name>
    <name type="common">Wheat</name>
    <dbReference type="NCBI Taxonomy" id="4565"/>
    <lineage>
        <taxon>Eukaryota</taxon>
        <taxon>Viridiplantae</taxon>
        <taxon>Streptophyta</taxon>
        <taxon>Embryophyta</taxon>
        <taxon>Tracheophyta</taxon>
        <taxon>Spermatophyta</taxon>
        <taxon>Magnoliopsida</taxon>
        <taxon>Liliopsida</taxon>
        <taxon>Poales</taxon>
        <taxon>Poaceae</taxon>
        <taxon>BOP clade</taxon>
        <taxon>Pooideae</taxon>
        <taxon>Triticodae</taxon>
        <taxon>Triticeae</taxon>
        <taxon>Triticinae</taxon>
        <taxon>Triticum</taxon>
    </lineage>
</organism>
<dbReference type="EMBL" id="X02538">
    <property type="protein sequence ID" value="CAA26383.1"/>
    <property type="molecule type" value="Genomic_DNA"/>
</dbReference>
<dbReference type="EMBL" id="K03074">
    <property type="protein sequence ID" value="AAA34277.1"/>
    <property type="molecule type" value="Genomic_DNA"/>
</dbReference>
<dbReference type="PIR" id="S07361">
    <property type="entry name" value="S07361"/>
</dbReference>
<dbReference type="STRING" id="4565.P04726"/>
<dbReference type="EnsemblPlants" id="TraesARI6A03G03204200.1">
    <property type="protein sequence ID" value="TraesARI6A03G03204200.1.CDS1"/>
    <property type="gene ID" value="TraesARI6A03G03204200"/>
</dbReference>
<dbReference type="EnsemblPlants" id="TraesSYM6A03G03189820.1">
    <property type="protein sequence ID" value="TraesSYM6A03G03189820.1.CDS1"/>
    <property type="gene ID" value="TraesSYM6A03G03189820"/>
</dbReference>
<dbReference type="Gramene" id="TraesARI6A03G03204200.1">
    <property type="protein sequence ID" value="TraesARI6A03G03204200.1.CDS1"/>
    <property type="gene ID" value="TraesARI6A03G03204200"/>
</dbReference>
<dbReference type="Gramene" id="TraesSYM6A03G03189820.1">
    <property type="protein sequence ID" value="TraesSYM6A03G03189820.1.CDS1"/>
    <property type="gene ID" value="TraesSYM6A03G03189820"/>
</dbReference>
<dbReference type="Proteomes" id="UP000019116">
    <property type="component" value="Unplaced"/>
</dbReference>
<dbReference type="ExpressionAtlas" id="P04726">
    <property type="expression patterns" value="baseline"/>
</dbReference>
<dbReference type="GO" id="GO:0045735">
    <property type="term" value="F:nutrient reservoir activity"/>
    <property type="evidence" value="ECO:0007669"/>
    <property type="project" value="UniProtKB-KW"/>
</dbReference>
<dbReference type="Gene3D" id="1.10.110.10">
    <property type="entry name" value="Plant lipid-transfer and hydrophobic proteins"/>
    <property type="match status" value="2"/>
</dbReference>
<dbReference type="InterPro" id="IPR036312">
    <property type="entry name" value="Bifun_inhib/LTP/seed_sf"/>
</dbReference>
<dbReference type="InterPro" id="IPR016140">
    <property type="entry name" value="Bifunc_inhib/LTP/seed_store"/>
</dbReference>
<dbReference type="InterPro" id="IPR001954">
    <property type="entry name" value="Glia_glutenin"/>
</dbReference>
<dbReference type="PANTHER" id="PTHR33454:SF7">
    <property type="entry name" value="ALPHA_BETA-GLIADIN MM1"/>
    <property type="match status" value="1"/>
</dbReference>
<dbReference type="PANTHER" id="PTHR33454">
    <property type="entry name" value="PROLAMIN PPROL 14P"/>
    <property type="match status" value="1"/>
</dbReference>
<dbReference type="Pfam" id="PF00234">
    <property type="entry name" value="Tryp_alpha_amyl"/>
    <property type="match status" value="1"/>
</dbReference>
<dbReference type="PRINTS" id="PR00208">
    <property type="entry name" value="GLIADGLUTEN"/>
</dbReference>
<dbReference type="PRINTS" id="PR00209">
    <property type="entry name" value="GLIADIN"/>
</dbReference>
<dbReference type="SMART" id="SM00499">
    <property type="entry name" value="AAI"/>
    <property type="match status" value="1"/>
</dbReference>
<dbReference type="SUPFAM" id="SSF47699">
    <property type="entry name" value="Bifunctional inhibitor/lipid-transfer protein/seed storage 2S albumin"/>
    <property type="match status" value="1"/>
</dbReference>
<proteinExistence type="inferred from homology"/>
<reference key="1">
    <citation type="journal article" date="1985" name="Nucleic Acids Res.">
        <title>Conservation and variability of wheat alpha/beta-gliadin genes.</title>
        <authorList>
            <person name="Sumner-Smith M."/>
            <person name="Rafalski J.A."/>
            <person name="Sugiyama T."/>
            <person name="Stoll M."/>
            <person name="Soell D."/>
        </authorList>
    </citation>
    <scope>NUCLEOTIDE SEQUENCE [GENOMIC DNA]</scope>
</reference>
<comment type="function">
    <text>Gliadin is the major seed storage protein in wheat.</text>
</comment>
<comment type="PTM">
    <text evidence="1">Substrate of transglutaminase.</text>
</comment>
<comment type="allergen">
    <text evidence="1">Causes an allergic reaction in human. Is the cause of the celiac disease, also known as celiac sprue or gluten-sensitive enteropathy (By similarity).</text>
</comment>
<comment type="miscellaneous">
    <text>The alpha/beta-gliadins can be divided into 5 homology classes. Sequence divergence between the classes is due to single base substitutions and to duplications or deletions within or near direct repeats. There are more than a 100 copies of the gene for alpha/beta-gliadin per haploid genome.</text>
</comment>
<comment type="similarity">
    <text evidence="3">Belongs to the gliadin/glutenin family.</text>
</comment>